<comment type="function">
    <text evidence="1">Secreted chitinase involved in the degradation of chitin, a component of the cell walls of fungi and exoskeletal elements of some animals (including worms and arthropods). Participates in the infection process and directly acts in the penetration process of the host cuticle (By similarity).</text>
</comment>
<comment type="catalytic activity">
    <reaction>
        <text>Random endo-hydrolysis of N-acetyl-beta-D-glucosaminide (1-&gt;4)-beta-linkages in chitin and chitodextrins.</text>
        <dbReference type="EC" id="3.2.1.14"/>
    </reaction>
</comment>
<comment type="subcellular location">
    <subcellularLocation>
        <location evidence="1">Secreted</location>
    </subcellularLocation>
</comment>
<comment type="similarity">
    <text evidence="4">Belongs to the glycosyl hydrolase 18 family. Chitinase class V subfamily.</text>
</comment>
<reference key="1">
    <citation type="journal article" date="2011" name="PLoS Genet.">
        <title>Genome sequencing and comparative transcriptomics of the model entomopathogenic fungi Metarhizium anisopliae and M. acridum.</title>
        <authorList>
            <person name="Gao Q."/>
            <person name="Jin K."/>
            <person name="Ying S.-H."/>
            <person name="Zhang Y."/>
            <person name="Xiao G."/>
            <person name="Shang Y."/>
            <person name="Duan Z."/>
            <person name="Hu X."/>
            <person name="Xie X.-Q."/>
            <person name="Zhou G."/>
            <person name="Peng G."/>
            <person name="Luo Z."/>
            <person name="Huang W."/>
            <person name="Wang B."/>
            <person name="Fang W."/>
            <person name="Wang S."/>
            <person name="Zhong Y."/>
            <person name="Ma L.-J."/>
            <person name="St Leger R.J."/>
            <person name="Zhao G.-P."/>
            <person name="Pei Y."/>
            <person name="Feng M.-G."/>
            <person name="Xia Y."/>
            <person name="Wang C."/>
        </authorList>
    </citation>
    <scope>NUCLEOTIDE SEQUENCE [LARGE SCALE GENOMIC DNA]</scope>
    <source>
        <strain>ARSEF 23 / ATCC MYA-3075</strain>
    </source>
</reference>
<reference key="2">
    <citation type="journal article" date="2014" name="Proc. Natl. Acad. Sci. U.S.A.">
        <title>Trajectory and genomic determinants of fungal-pathogen speciation and host adaptation.</title>
        <authorList>
            <person name="Hu X."/>
            <person name="Xiao G."/>
            <person name="Zheng P."/>
            <person name="Shang Y."/>
            <person name="Su Y."/>
            <person name="Zhang X."/>
            <person name="Liu X."/>
            <person name="Zhan S."/>
            <person name="St Leger R.J."/>
            <person name="Wang C."/>
        </authorList>
    </citation>
    <scope>GENOME REANNOTATION</scope>
    <source>
        <strain>ARSEF 23 / ATCC MYA-3075</strain>
    </source>
</reference>
<sequence>MAPLLNTGLVILPLIVSTLLGPMPAFAQNETCATKGKPAGKVLQGYWENWDGAKNGVHPPFGWTPIQDAQIRQHGYNVISAAFPVILPNGTALWEDGMDANVKVATPAEMCQAKAAGATIVMSIGGATAAIDLSSSSVADKFVSTIVPILKRYNFDGVDIDIEAGLSGSGTIGTLSTSQANLVRIIDGILAQMPSNFGLTMAPETAYVTGGSVTYGAIWGAYLPIIKKYADNGRLWWLNMQYYNGDMYGCSGDSYKAGTVEGFVAQTDCLNKGLVIQGTTIRVPYDKQVPGLPAQSGAGGGYMSPSLVGQAWDHYNGSLKGLMTWSINWDGSKGWTFGDNVKGRL</sequence>
<protein>
    <recommendedName>
        <fullName>Endochitinase 4</fullName>
        <ecNumber>3.2.1.14</ecNumber>
    </recommendedName>
    <alternativeName>
        <fullName>Chitinase 4</fullName>
    </alternativeName>
</protein>
<keyword id="KW-0119">Carbohydrate metabolism</keyword>
<keyword id="KW-0146">Chitin degradation</keyword>
<keyword id="KW-0147">Chitin-binding</keyword>
<keyword id="KW-0325">Glycoprotein</keyword>
<keyword id="KW-0326">Glycosidase</keyword>
<keyword id="KW-0378">Hydrolase</keyword>
<keyword id="KW-0624">Polysaccharide degradation</keyword>
<keyword id="KW-0964">Secreted</keyword>
<keyword id="KW-0732">Signal</keyword>
<keyword id="KW-0843">Virulence</keyword>
<proteinExistence type="inferred from homology"/>
<evidence type="ECO:0000250" key="1"/>
<evidence type="ECO:0000255" key="2"/>
<evidence type="ECO:0000255" key="3">
    <source>
        <dbReference type="PROSITE-ProRule" id="PRU01258"/>
    </source>
</evidence>
<evidence type="ECO:0000305" key="4"/>
<organism>
    <name type="scientific">Metarhizium robertsii (strain ARSEF 23 / ATCC MYA-3075)</name>
    <name type="common">Metarhizium anisopliae (strain ARSEF 23)</name>
    <dbReference type="NCBI Taxonomy" id="655844"/>
    <lineage>
        <taxon>Eukaryota</taxon>
        <taxon>Fungi</taxon>
        <taxon>Dikarya</taxon>
        <taxon>Ascomycota</taxon>
        <taxon>Pezizomycotina</taxon>
        <taxon>Sordariomycetes</taxon>
        <taxon>Hypocreomycetidae</taxon>
        <taxon>Hypocreales</taxon>
        <taxon>Clavicipitaceae</taxon>
        <taxon>Metarhizium</taxon>
    </lineage>
</organism>
<name>CHI4_METRA</name>
<accession>E9F7R6</accession>
<feature type="signal peptide" evidence="2">
    <location>
        <begin position="1"/>
        <end position="27"/>
    </location>
</feature>
<feature type="chain" id="PRO_0000429871" description="Endochitinase 4">
    <location>
        <begin position="28"/>
        <end position="345"/>
    </location>
</feature>
<feature type="domain" description="GH18" evidence="3">
    <location>
        <begin position="41"/>
        <end position="345"/>
    </location>
</feature>
<feature type="active site" description="Proton donor" evidence="3">
    <location>
        <position position="163"/>
    </location>
</feature>
<feature type="glycosylation site" description="N-linked (GlcNAc...) asparagine" evidence="2">
    <location>
        <position position="29"/>
    </location>
</feature>
<feature type="glycosylation site" description="N-linked (GlcNAc...) asparagine" evidence="2">
    <location>
        <position position="89"/>
    </location>
</feature>
<feature type="glycosylation site" description="N-linked (GlcNAc...) asparagine" evidence="2">
    <location>
        <position position="316"/>
    </location>
</feature>
<dbReference type="EC" id="3.2.1.14"/>
<dbReference type="EMBL" id="ADNJ02000001">
    <property type="protein sequence ID" value="EFY96204.1"/>
    <property type="molecule type" value="Genomic_DNA"/>
</dbReference>
<dbReference type="RefSeq" id="XP_007824504.1">
    <property type="nucleotide sequence ID" value="XM_007826313.1"/>
</dbReference>
<dbReference type="SMR" id="E9F7R6"/>
<dbReference type="CAZy" id="GH18">
    <property type="family name" value="Glycoside Hydrolase Family 18"/>
</dbReference>
<dbReference type="GlyCosmos" id="E9F7R6">
    <property type="glycosylation" value="3 sites, No reported glycans"/>
</dbReference>
<dbReference type="GeneID" id="19262601"/>
<dbReference type="KEGG" id="maj:MAA_08315"/>
<dbReference type="HOGENOM" id="CLU_019399_1_2_1"/>
<dbReference type="OrthoDB" id="3012298at2759"/>
<dbReference type="Proteomes" id="UP000002498">
    <property type="component" value="Unassembled WGS sequence"/>
</dbReference>
<dbReference type="GO" id="GO:0005576">
    <property type="term" value="C:extracellular region"/>
    <property type="evidence" value="ECO:0007669"/>
    <property type="project" value="UniProtKB-SubCell"/>
</dbReference>
<dbReference type="GO" id="GO:0008061">
    <property type="term" value="F:chitin binding"/>
    <property type="evidence" value="ECO:0007669"/>
    <property type="project" value="UniProtKB-KW"/>
</dbReference>
<dbReference type="GO" id="GO:0008843">
    <property type="term" value="F:endochitinase activity"/>
    <property type="evidence" value="ECO:0007669"/>
    <property type="project" value="UniProtKB-EC"/>
</dbReference>
<dbReference type="GO" id="GO:0006032">
    <property type="term" value="P:chitin catabolic process"/>
    <property type="evidence" value="ECO:0007669"/>
    <property type="project" value="UniProtKB-KW"/>
</dbReference>
<dbReference type="GO" id="GO:0000272">
    <property type="term" value="P:polysaccharide catabolic process"/>
    <property type="evidence" value="ECO:0007669"/>
    <property type="project" value="UniProtKB-KW"/>
</dbReference>
<dbReference type="CDD" id="cd02871">
    <property type="entry name" value="GH18_chitinase_D-like"/>
    <property type="match status" value="1"/>
</dbReference>
<dbReference type="Gene3D" id="3.20.20.80">
    <property type="entry name" value="Glycosidases"/>
    <property type="match status" value="1"/>
</dbReference>
<dbReference type="InterPro" id="IPR001223">
    <property type="entry name" value="Glyco_hydro18_cat"/>
</dbReference>
<dbReference type="InterPro" id="IPR001579">
    <property type="entry name" value="Glyco_hydro_18_chit_AS"/>
</dbReference>
<dbReference type="InterPro" id="IPR017853">
    <property type="entry name" value="Glycoside_hydrolase_SF"/>
</dbReference>
<dbReference type="InterPro" id="IPR050542">
    <property type="entry name" value="Glycosyl_Hydrlase18_Chitinase"/>
</dbReference>
<dbReference type="PANTHER" id="PTHR45708">
    <property type="entry name" value="ENDOCHITINASE"/>
    <property type="match status" value="1"/>
</dbReference>
<dbReference type="PANTHER" id="PTHR45708:SF49">
    <property type="entry name" value="ENDOCHITINASE"/>
    <property type="match status" value="1"/>
</dbReference>
<dbReference type="Pfam" id="PF00704">
    <property type="entry name" value="Glyco_hydro_18"/>
    <property type="match status" value="1"/>
</dbReference>
<dbReference type="SUPFAM" id="SSF51445">
    <property type="entry name" value="(Trans)glycosidases"/>
    <property type="match status" value="1"/>
</dbReference>
<dbReference type="PROSITE" id="PS01095">
    <property type="entry name" value="GH18_1"/>
    <property type="match status" value="1"/>
</dbReference>
<dbReference type="PROSITE" id="PS51910">
    <property type="entry name" value="GH18_2"/>
    <property type="match status" value="1"/>
</dbReference>
<gene>
    <name type="primary">chi4</name>
    <name type="ORF">MAA_08315</name>
</gene>